<evidence type="ECO:0000255" key="1">
    <source>
        <dbReference type="HAMAP-Rule" id="MF_00038"/>
    </source>
</evidence>
<evidence type="ECO:0000305" key="2"/>
<sequence length="392" mass="43278">MLLSLAQWLQSISPEFGSFRVFQYLTFRAVMAALTALLIGLLAGPFVIRRLISLKIGQPIREYAMQTHLSKSGTPTMGGVLILMSIGISTLLWFDLSNRFVWIVLLVTLGFGAIGWADDWRKVVLKDPEGMRSREKYLWQSLIGLVAALYLVFSISESSNLRVLELFFSWVQSGFDVDLPPKAGLLVPFVKEISYPLGVFGFVILTYLVIVGSSNAVNLTDGLDGLAIMPVVMVGSALGVFAYVTGSAVYSKYLFFPHIPGSGELLIFCSAMAGAGLAFLWFNTHPAQVFMGDVGALALGAALGTIAVIVRQEIVLAIMGGIFVVEALSVMMQVIWFKYTKKRYGEGRRLFKMAPLHHHFEKSGWKETQVVVRFWIITMLLCLVGLSTLKLR</sequence>
<gene>
    <name evidence="1" type="primary">mraY</name>
    <name type="ordered locus">Bpro_1072</name>
</gene>
<proteinExistence type="inferred from homology"/>
<name>MRAY_POLSJ</name>
<accession>Q12EL8</accession>
<dbReference type="EC" id="2.7.8.13" evidence="1"/>
<dbReference type="EMBL" id="CP000316">
    <property type="protein sequence ID" value="ABE43024.1"/>
    <property type="status" value="ALT_INIT"/>
    <property type="molecule type" value="Genomic_DNA"/>
</dbReference>
<dbReference type="RefSeq" id="WP_041388408.1">
    <property type="nucleotide sequence ID" value="NC_007948.1"/>
</dbReference>
<dbReference type="SMR" id="Q12EL8"/>
<dbReference type="STRING" id="296591.Bpro_1072"/>
<dbReference type="KEGG" id="pol:Bpro_1072"/>
<dbReference type="eggNOG" id="COG0472">
    <property type="taxonomic scope" value="Bacteria"/>
</dbReference>
<dbReference type="HOGENOM" id="CLU_023982_0_0_4"/>
<dbReference type="OrthoDB" id="9805475at2"/>
<dbReference type="UniPathway" id="UPA00219"/>
<dbReference type="Proteomes" id="UP000001983">
    <property type="component" value="Chromosome"/>
</dbReference>
<dbReference type="GO" id="GO:0005886">
    <property type="term" value="C:plasma membrane"/>
    <property type="evidence" value="ECO:0007669"/>
    <property type="project" value="UniProtKB-SubCell"/>
</dbReference>
<dbReference type="GO" id="GO:0046872">
    <property type="term" value="F:metal ion binding"/>
    <property type="evidence" value="ECO:0007669"/>
    <property type="project" value="UniProtKB-KW"/>
</dbReference>
<dbReference type="GO" id="GO:0008963">
    <property type="term" value="F:phospho-N-acetylmuramoyl-pentapeptide-transferase activity"/>
    <property type="evidence" value="ECO:0007669"/>
    <property type="project" value="UniProtKB-UniRule"/>
</dbReference>
<dbReference type="GO" id="GO:0051992">
    <property type="term" value="F:UDP-N-acetylmuramoyl-L-alanyl-D-glutamyl-meso-2,6-diaminopimelyl-D-alanyl-D-alanine:undecaprenyl-phosphate transferase activity"/>
    <property type="evidence" value="ECO:0007669"/>
    <property type="project" value="RHEA"/>
</dbReference>
<dbReference type="GO" id="GO:0051301">
    <property type="term" value="P:cell division"/>
    <property type="evidence" value="ECO:0007669"/>
    <property type="project" value="UniProtKB-KW"/>
</dbReference>
<dbReference type="GO" id="GO:0071555">
    <property type="term" value="P:cell wall organization"/>
    <property type="evidence" value="ECO:0007669"/>
    <property type="project" value="UniProtKB-KW"/>
</dbReference>
<dbReference type="GO" id="GO:0009252">
    <property type="term" value="P:peptidoglycan biosynthetic process"/>
    <property type="evidence" value="ECO:0007669"/>
    <property type="project" value="UniProtKB-UniRule"/>
</dbReference>
<dbReference type="GO" id="GO:0008360">
    <property type="term" value="P:regulation of cell shape"/>
    <property type="evidence" value="ECO:0007669"/>
    <property type="project" value="UniProtKB-KW"/>
</dbReference>
<dbReference type="CDD" id="cd06852">
    <property type="entry name" value="GT_MraY"/>
    <property type="match status" value="1"/>
</dbReference>
<dbReference type="HAMAP" id="MF_00038">
    <property type="entry name" value="MraY"/>
    <property type="match status" value="1"/>
</dbReference>
<dbReference type="InterPro" id="IPR000715">
    <property type="entry name" value="Glycosyl_transferase_4"/>
</dbReference>
<dbReference type="InterPro" id="IPR003524">
    <property type="entry name" value="PNAcMuramoyl-5peptid_Trfase"/>
</dbReference>
<dbReference type="InterPro" id="IPR018480">
    <property type="entry name" value="PNAcMuramoyl-5peptid_Trfase_CS"/>
</dbReference>
<dbReference type="NCBIfam" id="TIGR00445">
    <property type="entry name" value="mraY"/>
    <property type="match status" value="1"/>
</dbReference>
<dbReference type="PANTHER" id="PTHR22926">
    <property type="entry name" value="PHOSPHO-N-ACETYLMURAMOYL-PENTAPEPTIDE-TRANSFERASE"/>
    <property type="match status" value="1"/>
</dbReference>
<dbReference type="PANTHER" id="PTHR22926:SF5">
    <property type="entry name" value="PHOSPHO-N-ACETYLMURAMOYL-PENTAPEPTIDE-TRANSFERASE HOMOLOG"/>
    <property type="match status" value="1"/>
</dbReference>
<dbReference type="Pfam" id="PF00953">
    <property type="entry name" value="Glycos_transf_4"/>
    <property type="match status" value="1"/>
</dbReference>
<dbReference type="Pfam" id="PF10555">
    <property type="entry name" value="MraY_sig1"/>
    <property type="match status" value="1"/>
</dbReference>
<dbReference type="PROSITE" id="PS01347">
    <property type="entry name" value="MRAY_1"/>
    <property type="match status" value="1"/>
</dbReference>
<dbReference type="PROSITE" id="PS01348">
    <property type="entry name" value="MRAY_2"/>
    <property type="match status" value="1"/>
</dbReference>
<keyword id="KW-0131">Cell cycle</keyword>
<keyword id="KW-0132">Cell division</keyword>
<keyword id="KW-0997">Cell inner membrane</keyword>
<keyword id="KW-1003">Cell membrane</keyword>
<keyword id="KW-0133">Cell shape</keyword>
<keyword id="KW-0961">Cell wall biogenesis/degradation</keyword>
<keyword id="KW-0460">Magnesium</keyword>
<keyword id="KW-0472">Membrane</keyword>
<keyword id="KW-0479">Metal-binding</keyword>
<keyword id="KW-0573">Peptidoglycan synthesis</keyword>
<keyword id="KW-1185">Reference proteome</keyword>
<keyword id="KW-0808">Transferase</keyword>
<keyword id="KW-0812">Transmembrane</keyword>
<keyword id="KW-1133">Transmembrane helix</keyword>
<comment type="function">
    <text evidence="1">Catalyzes the initial step of the lipid cycle reactions in the biosynthesis of the cell wall peptidoglycan: transfers peptidoglycan precursor phospho-MurNAc-pentapeptide from UDP-MurNAc-pentapeptide onto the lipid carrier undecaprenyl phosphate, yielding undecaprenyl-pyrophosphoryl-MurNAc-pentapeptide, known as lipid I.</text>
</comment>
<comment type="catalytic activity">
    <reaction evidence="1">
        <text>UDP-N-acetyl-alpha-D-muramoyl-L-alanyl-gamma-D-glutamyl-meso-2,6-diaminopimeloyl-D-alanyl-D-alanine + di-trans,octa-cis-undecaprenyl phosphate = di-trans,octa-cis-undecaprenyl diphospho-N-acetyl-alpha-D-muramoyl-L-alanyl-D-glutamyl-meso-2,6-diaminopimeloyl-D-alanyl-D-alanine + UMP</text>
        <dbReference type="Rhea" id="RHEA:28386"/>
        <dbReference type="ChEBI" id="CHEBI:57865"/>
        <dbReference type="ChEBI" id="CHEBI:60392"/>
        <dbReference type="ChEBI" id="CHEBI:61386"/>
        <dbReference type="ChEBI" id="CHEBI:61387"/>
        <dbReference type="EC" id="2.7.8.13"/>
    </reaction>
</comment>
<comment type="cofactor">
    <cofactor evidence="1">
        <name>Mg(2+)</name>
        <dbReference type="ChEBI" id="CHEBI:18420"/>
    </cofactor>
</comment>
<comment type="pathway">
    <text evidence="1">Cell wall biogenesis; peptidoglycan biosynthesis.</text>
</comment>
<comment type="subcellular location">
    <subcellularLocation>
        <location evidence="1">Cell inner membrane</location>
        <topology evidence="1">Multi-pass membrane protein</topology>
    </subcellularLocation>
</comment>
<comment type="similarity">
    <text evidence="1">Belongs to the glycosyltransferase 4 family. MraY subfamily.</text>
</comment>
<comment type="sequence caution" evidence="2">
    <conflict type="erroneous initiation">
        <sequence resource="EMBL-CDS" id="ABE43024"/>
    </conflict>
</comment>
<protein>
    <recommendedName>
        <fullName evidence="1">Phospho-N-acetylmuramoyl-pentapeptide-transferase</fullName>
        <ecNumber evidence="1">2.7.8.13</ecNumber>
    </recommendedName>
    <alternativeName>
        <fullName evidence="1">UDP-MurNAc-pentapeptide phosphotransferase</fullName>
    </alternativeName>
</protein>
<feature type="chain" id="PRO_0000332542" description="Phospho-N-acetylmuramoyl-pentapeptide-transferase">
    <location>
        <begin position="1"/>
        <end position="392"/>
    </location>
</feature>
<feature type="transmembrane region" description="Helical" evidence="1">
    <location>
        <begin position="29"/>
        <end position="49"/>
    </location>
</feature>
<feature type="transmembrane region" description="Helical" evidence="1">
    <location>
        <begin position="76"/>
        <end position="96"/>
    </location>
</feature>
<feature type="transmembrane region" description="Helical" evidence="1">
    <location>
        <begin position="100"/>
        <end position="120"/>
    </location>
</feature>
<feature type="transmembrane region" description="Helical" evidence="1">
    <location>
        <begin position="137"/>
        <end position="157"/>
    </location>
</feature>
<feature type="transmembrane region" description="Helical" evidence="1">
    <location>
        <begin position="193"/>
        <end position="213"/>
    </location>
</feature>
<feature type="transmembrane region" description="Helical" evidence="1">
    <location>
        <begin position="225"/>
        <end position="245"/>
    </location>
</feature>
<feature type="transmembrane region" description="Helical" evidence="1">
    <location>
        <begin position="262"/>
        <end position="282"/>
    </location>
</feature>
<feature type="transmembrane region" description="Helical" evidence="1">
    <location>
        <begin position="289"/>
        <end position="309"/>
    </location>
</feature>
<feature type="transmembrane region" description="Helical" evidence="1">
    <location>
        <begin position="314"/>
        <end position="334"/>
    </location>
</feature>
<feature type="transmembrane region" description="Helical" evidence="1">
    <location>
        <begin position="369"/>
        <end position="389"/>
    </location>
</feature>
<organism>
    <name type="scientific">Polaromonas sp. (strain JS666 / ATCC BAA-500)</name>
    <dbReference type="NCBI Taxonomy" id="296591"/>
    <lineage>
        <taxon>Bacteria</taxon>
        <taxon>Pseudomonadati</taxon>
        <taxon>Pseudomonadota</taxon>
        <taxon>Betaproteobacteria</taxon>
        <taxon>Burkholderiales</taxon>
        <taxon>Comamonadaceae</taxon>
        <taxon>Polaromonas</taxon>
    </lineage>
</organism>
<reference key="1">
    <citation type="journal article" date="2008" name="Appl. Environ. Microbiol.">
        <title>The genome of Polaromonas sp. strain JS666: insights into the evolution of a hydrocarbon- and xenobiotic-degrading bacterium, and features of relevance to biotechnology.</title>
        <authorList>
            <person name="Mattes T.E."/>
            <person name="Alexander A.K."/>
            <person name="Richardson P.M."/>
            <person name="Munk A.C."/>
            <person name="Han C.S."/>
            <person name="Stothard P."/>
            <person name="Coleman N.V."/>
        </authorList>
    </citation>
    <scope>NUCLEOTIDE SEQUENCE [LARGE SCALE GENOMIC DNA]</scope>
    <source>
        <strain>JS666 / ATCC BAA-500</strain>
    </source>
</reference>